<reference key="1">
    <citation type="journal article" date="2009" name="Vaccine">
        <title>Whole genome sequence analysis of Mycobacterium bovis bacillus Calmette-Guerin (BCG) Tokyo 172: a comparative study of BCG vaccine substrains.</title>
        <authorList>
            <person name="Seki M."/>
            <person name="Honda I."/>
            <person name="Fujita I."/>
            <person name="Yano I."/>
            <person name="Yamamoto S."/>
            <person name="Koyama A."/>
        </authorList>
    </citation>
    <scope>NUCLEOTIDE SEQUENCE [LARGE SCALE GENOMIC DNA]</scope>
    <source>
        <strain>BCG / Tokyo 172 / ATCC 35737 / TMC 1019</strain>
    </source>
</reference>
<comment type="function">
    <text evidence="1">Binds to the 23S rRNA.</text>
</comment>
<comment type="similarity">
    <text evidence="1">Belongs to the bacterial ribosomal protein bL9 family.</text>
</comment>
<protein>
    <recommendedName>
        <fullName evidence="1">Large ribosomal subunit protein bL9</fullName>
    </recommendedName>
    <alternativeName>
        <fullName evidence="2">50S ribosomal protein L9</fullName>
    </alternativeName>
</protein>
<organism>
    <name type="scientific">Mycobacterium bovis (strain BCG / Tokyo 172 / ATCC 35737 / TMC 1019)</name>
    <dbReference type="NCBI Taxonomy" id="561275"/>
    <lineage>
        <taxon>Bacteria</taxon>
        <taxon>Bacillati</taxon>
        <taxon>Actinomycetota</taxon>
        <taxon>Actinomycetes</taxon>
        <taxon>Mycobacteriales</taxon>
        <taxon>Mycobacteriaceae</taxon>
        <taxon>Mycobacterium</taxon>
        <taxon>Mycobacterium tuberculosis complex</taxon>
    </lineage>
</organism>
<evidence type="ECO:0000255" key="1">
    <source>
        <dbReference type="HAMAP-Rule" id="MF_00503"/>
    </source>
</evidence>
<evidence type="ECO:0000305" key="2"/>
<feature type="chain" id="PRO_1000196255" description="Large ribosomal subunit protein bL9">
    <location>
        <begin position="1"/>
        <end position="152"/>
    </location>
</feature>
<keyword id="KW-0687">Ribonucleoprotein</keyword>
<keyword id="KW-0689">Ribosomal protein</keyword>
<keyword id="KW-0694">RNA-binding</keyword>
<keyword id="KW-0699">rRNA-binding</keyword>
<sequence>MKLILTADVDHLGSIGDTVEVKDGYGRNFLLPRGLAIVASRGAQKQADEIRRARETKSVRDLEHANEIKAAIEALGPIALPVKTSADSGKLFGSVTAADVVAAIKKAGGPNLDKRIVRLPKTHIKAVGTHFVSVHLHPEIDVEVSLDVVAQS</sequence>
<gene>
    <name evidence="1" type="primary">rplI</name>
    <name type="ordered locus">JTY_0057</name>
</gene>
<proteinExistence type="inferred from homology"/>
<accession>C1AJ79</accession>
<dbReference type="EMBL" id="AP010918">
    <property type="protein sequence ID" value="BAH24358.1"/>
    <property type="molecule type" value="Genomic_DNA"/>
</dbReference>
<dbReference type="RefSeq" id="WP_003400543.1">
    <property type="nucleotide sequence ID" value="NZ_CP014566.1"/>
</dbReference>
<dbReference type="SMR" id="C1AJ79"/>
<dbReference type="GeneID" id="45424015"/>
<dbReference type="KEGG" id="mbt:JTY_0057"/>
<dbReference type="HOGENOM" id="CLU_078938_5_1_11"/>
<dbReference type="GO" id="GO:1990904">
    <property type="term" value="C:ribonucleoprotein complex"/>
    <property type="evidence" value="ECO:0007669"/>
    <property type="project" value="UniProtKB-KW"/>
</dbReference>
<dbReference type="GO" id="GO:0005840">
    <property type="term" value="C:ribosome"/>
    <property type="evidence" value="ECO:0007669"/>
    <property type="project" value="UniProtKB-KW"/>
</dbReference>
<dbReference type="GO" id="GO:0019843">
    <property type="term" value="F:rRNA binding"/>
    <property type="evidence" value="ECO:0007669"/>
    <property type="project" value="UniProtKB-UniRule"/>
</dbReference>
<dbReference type="GO" id="GO:0003735">
    <property type="term" value="F:structural constituent of ribosome"/>
    <property type="evidence" value="ECO:0007669"/>
    <property type="project" value="InterPro"/>
</dbReference>
<dbReference type="GO" id="GO:0006412">
    <property type="term" value="P:translation"/>
    <property type="evidence" value="ECO:0007669"/>
    <property type="project" value="UniProtKB-UniRule"/>
</dbReference>
<dbReference type="FunFam" id="3.10.430.100:FF:000006">
    <property type="entry name" value="50S ribosomal protein L9"/>
    <property type="match status" value="1"/>
</dbReference>
<dbReference type="FunFam" id="3.40.5.10:FF:000003">
    <property type="entry name" value="50S ribosomal protein L9"/>
    <property type="match status" value="1"/>
</dbReference>
<dbReference type="Gene3D" id="3.10.430.100">
    <property type="entry name" value="Ribosomal protein L9, C-terminal domain"/>
    <property type="match status" value="1"/>
</dbReference>
<dbReference type="Gene3D" id="3.40.5.10">
    <property type="entry name" value="Ribosomal protein L9, N-terminal domain"/>
    <property type="match status" value="1"/>
</dbReference>
<dbReference type="HAMAP" id="MF_00503">
    <property type="entry name" value="Ribosomal_bL9"/>
    <property type="match status" value="1"/>
</dbReference>
<dbReference type="InterPro" id="IPR000244">
    <property type="entry name" value="Ribosomal_bL9"/>
</dbReference>
<dbReference type="InterPro" id="IPR009027">
    <property type="entry name" value="Ribosomal_bL9/RNase_H1_N"/>
</dbReference>
<dbReference type="InterPro" id="IPR020594">
    <property type="entry name" value="Ribosomal_bL9_bac/chp"/>
</dbReference>
<dbReference type="InterPro" id="IPR020069">
    <property type="entry name" value="Ribosomal_bL9_C"/>
</dbReference>
<dbReference type="InterPro" id="IPR036791">
    <property type="entry name" value="Ribosomal_bL9_C_sf"/>
</dbReference>
<dbReference type="InterPro" id="IPR020070">
    <property type="entry name" value="Ribosomal_bL9_N"/>
</dbReference>
<dbReference type="InterPro" id="IPR036935">
    <property type="entry name" value="Ribosomal_bL9_N_sf"/>
</dbReference>
<dbReference type="NCBIfam" id="TIGR00158">
    <property type="entry name" value="L9"/>
    <property type="match status" value="1"/>
</dbReference>
<dbReference type="PANTHER" id="PTHR21368">
    <property type="entry name" value="50S RIBOSOMAL PROTEIN L9"/>
    <property type="match status" value="1"/>
</dbReference>
<dbReference type="Pfam" id="PF03948">
    <property type="entry name" value="Ribosomal_L9_C"/>
    <property type="match status" value="1"/>
</dbReference>
<dbReference type="Pfam" id="PF01281">
    <property type="entry name" value="Ribosomal_L9_N"/>
    <property type="match status" value="1"/>
</dbReference>
<dbReference type="SUPFAM" id="SSF55658">
    <property type="entry name" value="L9 N-domain-like"/>
    <property type="match status" value="1"/>
</dbReference>
<dbReference type="SUPFAM" id="SSF55653">
    <property type="entry name" value="Ribosomal protein L9 C-domain"/>
    <property type="match status" value="1"/>
</dbReference>
<dbReference type="PROSITE" id="PS00651">
    <property type="entry name" value="RIBOSOMAL_L9"/>
    <property type="match status" value="1"/>
</dbReference>
<name>RL9_MYCBT</name>